<proteinExistence type="evidence at protein level"/>
<keyword id="KW-0050">Antiport</keyword>
<keyword id="KW-1003">Cell membrane</keyword>
<keyword id="KW-0325">Glycoprotein</keyword>
<keyword id="KW-0449">Lipoprotein</keyword>
<keyword id="KW-0472">Membrane</keyword>
<keyword id="KW-0496">Mitochondrion</keyword>
<keyword id="KW-1000">Mitochondrion outer membrane</keyword>
<keyword id="KW-0519">Myristate</keyword>
<keyword id="KW-0597">Phosphoprotein</keyword>
<keyword id="KW-0812">Transmembrane</keyword>
<keyword id="KW-1133">Transmembrane helix</keyword>
<keyword id="KW-0813">Transport</keyword>
<evidence type="ECO:0000250" key="1">
    <source>
        <dbReference type="UniProtKB" id="Q8WWI5"/>
    </source>
</evidence>
<evidence type="ECO:0000255" key="2"/>
<evidence type="ECO:0000269" key="3">
    <source>
    </source>
</evidence>
<evidence type="ECO:0000269" key="4">
    <source>
    </source>
</evidence>
<evidence type="ECO:0000305" key="5"/>
<organism>
    <name type="scientific">Torpedo marmorata</name>
    <name type="common">Marbled electric ray</name>
    <dbReference type="NCBI Taxonomy" id="7788"/>
    <lineage>
        <taxon>Eukaryota</taxon>
        <taxon>Metazoa</taxon>
        <taxon>Chordata</taxon>
        <taxon>Craniata</taxon>
        <taxon>Vertebrata</taxon>
        <taxon>Chondrichthyes</taxon>
        <taxon>Elasmobranchii</taxon>
        <taxon>Batoidea</taxon>
        <taxon>Torpediniformes</taxon>
        <taxon>Torpedinidae</taxon>
        <taxon>Torpedo</taxon>
    </lineage>
</organism>
<sequence length="646" mass="72254">MGCCGCGSEEGSVRQWKPLEQRSCTDVLWLLIFVLFCIGMAIICGFAIASGAAQRLVFGYDSYGNICGHKNTEIKDVTMSGLDHTDKKYVFFFEPCNWDMVHLKILSVALCVTKCPDMDLKTLEDVRNFAKYNGSRLCLYNLDPTQYTSKNSKSCPILPVKSSKPIPFFHRCVPMDSGCKINFKALTTFVSYNSVLQRVITGVMTSKEIIVGLCLMSLVLSILLMVIIRYISKVLVWILAILTIIGSIGGTAVLWWLYADHKKTLKLDPSQGDVAADNVTALLVCAIIATVITVILLLLMLIMRKRVALTIALFHVAGKVFIHIPFLIFQSLWTFLALAFFWIYWIAVLLLLATAGYPQKKDQGYVEFKVSGPLQYTWIYHLVGLIWISEFILACQQMTIAGAVVTYYFTRDKHNLPATPILASMCRLIKYHLGTVAKGSFIITLIKIPQMILVYIHSQLKGKENACAKCMLKACMCCLWCLEKCLLYLNRNAYIATSINGTSFCTSAKDAIVILVENAMRVAAINTVGDFVLFLGKLLIVLVTGFVGIILLNYQRDYTVWVLPLIIICLFAFFVSHCFLSIYEMVVDVLFLCFAVDCKHNDGSPGREYYMDKSLMEFMDESRKAMRSVTGSGAEMKSMASGSDNA</sequence>
<comment type="function">
    <text evidence="4">Probable choline transporter. May be involved in membrane synthesis and myelin production.</text>
</comment>
<comment type="catalytic activity">
    <reaction evidence="4">
        <text>choline(out) + n H(+)(in) = choline(in) + n H(+)(out)</text>
        <dbReference type="Rhea" id="RHEA:75463"/>
        <dbReference type="ChEBI" id="CHEBI:15354"/>
        <dbReference type="ChEBI" id="CHEBI:15378"/>
    </reaction>
</comment>
<comment type="catalytic activity">
    <reaction evidence="1">
        <text>ethanolamine(out) + n H(+)(in) = ethanolamine(in) + n H(+)(out)</text>
        <dbReference type="Rhea" id="RHEA:75467"/>
        <dbReference type="ChEBI" id="CHEBI:15378"/>
        <dbReference type="ChEBI" id="CHEBI:57603"/>
    </reaction>
</comment>
<comment type="subcellular location">
    <subcellularLocation>
        <location evidence="3">Cell membrane</location>
        <topology evidence="3">Multi-pass membrane protein</topology>
    </subcellularLocation>
    <subcellularLocation>
        <location evidence="1">Mitochondrion outer membrane</location>
        <topology evidence="2">Multi-pass membrane protein</topology>
    </subcellularLocation>
</comment>
<comment type="tissue specificity">
    <text evidence="3 4">Present in myelinated structures from brain and spinal cord (at protein level).</text>
</comment>
<comment type="similarity">
    <text evidence="5">Belongs to the CTL (choline transporter-like) family.</text>
</comment>
<protein>
    <recommendedName>
        <fullName>Choline transporter-like protein 1</fullName>
    </recommendedName>
    <alternativeName>
        <fullName>Solute carrier family 44 member 1</fullName>
    </alternativeName>
</protein>
<dbReference type="EMBL" id="AJ245618">
    <property type="protein sequence ID" value="CAB75556.1"/>
    <property type="molecule type" value="mRNA"/>
</dbReference>
<dbReference type="SMR" id="Q9I9B9"/>
<dbReference type="GlyCosmos" id="Q9I9B9">
    <property type="glycosylation" value="2 sites, No reported glycans"/>
</dbReference>
<dbReference type="GO" id="GO:0005741">
    <property type="term" value="C:mitochondrial outer membrane"/>
    <property type="evidence" value="ECO:0000250"/>
    <property type="project" value="UniProtKB"/>
</dbReference>
<dbReference type="GO" id="GO:0005886">
    <property type="term" value="C:plasma membrane"/>
    <property type="evidence" value="ECO:0000250"/>
    <property type="project" value="UniProtKB"/>
</dbReference>
<dbReference type="GO" id="GO:0015297">
    <property type="term" value="F:antiporter activity"/>
    <property type="evidence" value="ECO:0007669"/>
    <property type="project" value="UniProtKB-KW"/>
</dbReference>
<dbReference type="GO" id="GO:0015220">
    <property type="term" value="F:choline transmembrane transporter activity"/>
    <property type="evidence" value="ECO:0000250"/>
    <property type="project" value="UniProtKB"/>
</dbReference>
<dbReference type="GO" id="GO:0034228">
    <property type="term" value="F:ethanolamine transmembrane transporter activity"/>
    <property type="evidence" value="ECO:0000250"/>
    <property type="project" value="UniProtKB"/>
</dbReference>
<dbReference type="GO" id="GO:0015871">
    <property type="term" value="P:choline transport"/>
    <property type="evidence" value="ECO:0000250"/>
    <property type="project" value="UniProtKB"/>
</dbReference>
<dbReference type="GO" id="GO:0034229">
    <property type="term" value="P:ethanolamine transport"/>
    <property type="evidence" value="ECO:0000250"/>
    <property type="project" value="UniProtKB"/>
</dbReference>
<dbReference type="InterPro" id="IPR007603">
    <property type="entry name" value="Choline_transptr-like"/>
</dbReference>
<dbReference type="PANTHER" id="PTHR12385">
    <property type="entry name" value="CHOLINE TRANSPORTER-LIKE (SLC FAMILY 44)"/>
    <property type="match status" value="1"/>
</dbReference>
<dbReference type="PANTHER" id="PTHR12385:SF12">
    <property type="entry name" value="CHOLINE TRANSPORTER-LIKE PROTEIN"/>
    <property type="match status" value="1"/>
</dbReference>
<dbReference type="Pfam" id="PF04515">
    <property type="entry name" value="Choline_transpo"/>
    <property type="match status" value="1"/>
</dbReference>
<feature type="chain" id="PRO_0000191715" description="Choline transporter-like protein 1">
    <location>
        <begin position="1"/>
        <end position="646"/>
    </location>
</feature>
<feature type="topological domain" description="Cytoplasmic" evidence="2">
    <location>
        <begin position="1"/>
        <end position="27"/>
    </location>
</feature>
<feature type="transmembrane region" description="Helical" evidence="2">
    <location>
        <begin position="28"/>
        <end position="48"/>
    </location>
</feature>
<feature type="topological domain" description="Extracellular" evidence="2">
    <location>
        <begin position="49"/>
        <end position="207"/>
    </location>
</feature>
<feature type="transmembrane region" description="Helical" evidence="2">
    <location>
        <begin position="208"/>
        <end position="228"/>
    </location>
</feature>
<feature type="topological domain" description="Cytoplasmic" evidence="2">
    <location>
        <begin position="229"/>
        <end position="233"/>
    </location>
</feature>
<feature type="transmembrane region" description="Helical" evidence="2">
    <location>
        <begin position="234"/>
        <end position="254"/>
    </location>
</feature>
<feature type="topological domain" description="Extracellular" evidence="2">
    <location>
        <begin position="255"/>
        <end position="281"/>
    </location>
</feature>
<feature type="transmembrane region" description="Helical" evidence="2">
    <location>
        <begin position="282"/>
        <end position="302"/>
    </location>
</feature>
<feature type="topological domain" description="Cytoplasmic" evidence="2">
    <location>
        <begin position="303"/>
        <end position="308"/>
    </location>
</feature>
<feature type="transmembrane region" description="Helical" evidence="2">
    <location>
        <begin position="309"/>
        <end position="329"/>
    </location>
</feature>
<feature type="topological domain" description="Extracellular" evidence="2">
    <location>
        <begin position="330"/>
        <end position="331"/>
    </location>
</feature>
<feature type="transmembrane region" description="Helical" evidence="2">
    <location>
        <begin position="332"/>
        <end position="352"/>
    </location>
</feature>
<feature type="topological domain" description="Cytoplasmic" evidence="2">
    <location>
        <begin position="353"/>
        <end position="373"/>
    </location>
</feature>
<feature type="transmembrane region" description="Helical" evidence="2">
    <location>
        <begin position="374"/>
        <end position="394"/>
    </location>
</feature>
<feature type="topological domain" description="Extracellular" evidence="2">
    <location>
        <begin position="395"/>
        <end position="435"/>
    </location>
</feature>
<feature type="transmembrane region" description="Helical" evidence="2">
    <location>
        <begin position="436"/>
        <end position="456"/>
    </location>
</feature>
<feature type="topological domain" description="Cytoplasmic" evidence="2">
    <location>
        <begin position="457"/>
        <end position="530"/>
    </location>
</feature>
<feature type="transmembrane region" description="Helical" evidence="2">
    <location>
        <begin position="531"/>
        <end position="551"/>
    </location>
</feature>
<feature type="topological domain" description="Extracellular" evidence="2">
    <location>
        <begin position="552"/>
        <end position="559"/>
    </location>
</feature>
<feature type="transmembrane region" description="Helical" evidence="2">
    <location>
        <begin position="560"/>
        <end position="580"/>
    </location>
</feature>
<feature type="topological domain" description="Cytoplasmic" evidence="2">
    <location>
        <begin position="581"/>
        <end position="646"/>
    </location>
</feature>
<feature type="glycosylation site" description="N-linked (GlcNAc...) asparagine" evidence="2">
    <location>
        <position position="133"/>
    </location>
</feature>
<feature type="glycosylation site" description="N-linked (GlcNAc...) asparagine" evidence="2">
    <location>
        <position position="278"/>
    </location>
</feature>
<gene>
    <name type="primary">slc44a1</name>
    <name type="synonym">ctl1</name>
</gene>
<name>CTL1_TORMA</name>
<accession>Q9I9B9</accession>
<reference key="1">
    <citation type="journal article" date="2000" name="Proc. Natl. Acad. Sci. U.S.A.">
        <title>An electric lobe suppressor for a yeast choline transport mutation belongs to a new family of transporter-like proteins.</title>
        <authorList>
            <person name="O'Regan S."/>
            <person name="Traiffort E."/>
            <person name="Ruat M."/>
            <person name="Cha N."/>
            <person name="Compaore D."/>
            <person name="Meunier F.-M."/>
        </authorList>
    </citation>
    <scope>NUCLEOTIDE SEQUENCE [MRNA]</scope>
</reference>
<reference key="2">
    <citation type="journal article" date="2002" name="NeuroReport">
        <title>Expression of CTL1 in myelinating structures of Torpedo marmorata.</title>
        <authorList>
            <person name="Meunier F.-M."/>
            <person name="O'Regan S."/>
        </authorList>
    </citation>
    <scope>TISSUE SPECIFICITY</scope>
    <scope>SUBCELLULAR LOCATION</scope>
</reference>
<reference key="3">
    <citation type="journal article" date="2003" name="Neurochem. Res.">
        <title>Selection and characterization of the choline transport mutation suppressor from Torpedo electric lobe, CTL1.</title>
        <authorList>
            <person name="O'Regan S."/>
            <person name="Meunier F.-M."/>
        </authorList>
    </citation>
    <scope>FUNCTION</scope>
    <scope>TISSUE SPECIFICITY</scope>
    <scope>TRANSPORTER ACTIVITY</scope>
</reference>